<feature type="chain" id="PRO_0000241864" description="Orotidine 5'-phosphate decarboxylase">
    <location>
        <begin position="1"/>
        <end position="230"/>
    </location>
</feature>
<feature type="active site" description="Proton donor" evidence="1">
    <location>
        <position position="61"/>
    </location>
</feature>
<feature type="binding site" evidence="1">
    <location>
        <position position="10"/>
    </location>
    <ligand>
        <name>substrate</name>
    </ligand>
</feature>
<feature type="binding site" evidence="1">
    <location>
        <position position="32"/>
    </location>
    <ligand>
        <name>substrate</name>
    </ligand>
</feature>
<feature type="binding site" evidence="1">
    <location>
        <begin position="59"/>
        <end position="68"/>
    </location>
    <ligand>
        <name>substrate</name>
    </ligand>
</feature>
<feature type="binding site" evidence="1">
    <location>
        <position position="119"/>
    </location>
    <ligand>
        <name>substrate</name>
    </ligand>
</feature>
<feature type="binding site" evidence="1">
    <location>
        <position position="180"/>
    </location>
    <ligand>
        <name>substrate</name>
    </ligand>
</feature>
<feature type="binding site" evidence="1">
    <location>
        <position position="189"/>
    </location>
    <ligand>
        <name>substrate</name>
    </ligand>
</feature>
<feature type="binding site" evidence="1">
    <location>
        <position position="209"/>
    </location>
    <ligand>
        <name>substrate</name>
    </ligand>
</feature>
<feature type="binding site" evidence="1">
    <location>
        <position position="210"/>
    </location>
    <ligand>
        <name>substrate</name>
    </ligand>
</feature>
<sequence length="230" mass="25265">MTSKIIVALDYEKEAEALALVDQIDPSLCRLKVGKEMFTTLGINFVKQLHQRNFDVFLDLKYHDIPNTVARAVRSAADLGVWMVDLHASGGLRMMEEAKKILEPYGKDAPLLIAVTVLTSMEDLDLLQIGINASPMEQVLRLAHLTQRAGLDGVVCSPQEVEILRNTCGKEFKLVTPGIRPIGTDFGDQRRVMTPTAAIRAGSDYLVIGRPITQADNPAEVLRSINVSIG</sequence>
<name>PYRF_HAEI8</name>
<gene>
    <name evidence="1" type="primary">pyrF</name>
    <name type="ordered locus">NTHI1944</name>
</gene>
<dbReference type="EC" id="4.1.1.23" evidence="1"/>
<dbReference type="EMBL" id="CP000057">
    <property type="protein sequence ID" value="AAX88696.1"/>
    <property type="molecule type" value="Genomic_DNA"/>
</dbReference>
<dbReference type="RefSeq" id="WP_005657628.1">
    <property type="nucleotide sequence ID" value="NC_007146.2"/>
</dbReference>
<dbReference type="SMR" id="Q4QJV1"/>
<dbReference type="GeneID" id="93220642"/>
<dbReference type="KEGG" id="hit:NTHI1944"/>
<dbReference type="HOGENOM" id="CLU_067069_0_0_6"/>
<dbReference type="UniPathway" id="UPA00070">
    <property type="reaction ID" value="UER00120"/>
</dbReference>
<dbReference type="Proteomes" id="UP000002525">
    <property type="component" value="Chromosome"/>
</dbReference>
<dbReference type="GO" id="GO:0005829">
    <property type="term" value="C:cytosol"/>
    <property type="evidence" value="ECO:0007669"/>
    <property type="project" value="TreeGrafter"/>
</dbReference>
<dbReference type="GO" id="GO:0004590">
    <property type="term" value="F:orotidine-5'-phosphate decarboxylase activity"/>
    <property type="evidence" value="ECO:0007669"/>
    <property type="project" value="UniProtKB-UniRule"/>
</dbReference>
<dbReference type="GO" id="GO:0006207">
    <property type="term" value="P:'de novo' pyrimidine nucleobase biosynthetic process"/>
    <property type="evidence" value="ECO:0007669"/>
    <property type="project" value="InterPro"/>
</dbReference>
<dbReference type="GO" id="GO:0044205">
    <property type="term" value="P:'de novo' UMP biosynthetic process"/>
    <property type="evidence" value="ECO:0007669"/>
    <property type="project" value="UniProtKB-UniRule"/>
</dbReference>
<dbReference type="CDD" id="cd04725">
    <property type="entry name" value="OMP_decarboxylase_like"/>
    <property type="match status" value="1"/>
</dbReference>
<dbReference type="FunFam" id="3.20.20.70:FF:000015">
    <property type="entry name" value="Orotidine 5'-phosphate decarboxylase"/>
    <property type="match status" value="1"/>
</dbReference>
<dbReference type="Gene3D" id="3.20.20.70">
    <property type="entry name" value="Aldolase class I"/>
    <property type="match status" value="1"/>
</dbReference>
<dbReference type="HAMAP" id="MF_01200_B">
    <property type="entry name" value="OMPdecase_type1_B"/>
    <property type="match status" value="1"/>
</dbReference>
<dbReference type="InterPro" id="IPR013785">
    <property type="entry name" value="Aldolase_TIM"/>
</dbReference>
<dbReference type="InterPro" id="IPR014732">
    <property type="entry name" value="OMPdecase"/>
</dbReference>
<dbReference type="InterPro" id="IPR018089">
    <property type="entry name" value="OMPdecase_AS"/>
</dbReference>
<dbReference type="InterPro" id="IPR047596">
    <property type="entry name" value="OMPdecase_bac"/>
</dbReference>
<dbReference type="InterPro" id="IPR001754">
    <property type="entry name" value="OMPdeCOase_dom"/>
</dbReference>
<dbReference type="InterPro" id="IPR011060">
    <property type="entry name" value="RibuloseP-bd_barrel"/>
</dbReference>
<dbReference type="NCBIfam" id="NF001273">
    <property type="entry name" value="PRK00230.1"/>
    <property type="match status" value="1"/>
</dbReference>
<dbReference type="NCBIfam" id="TIGR01740">
    <property type="entry name" value="pyrF"/>
    <property type="match status" value="1"/>
</dbReference>
<dbReference type="PANTHER" id="PTHR32119">
    <property type="entry name" value="OROTIDINE 5'-PHOSPHATE DECARBOXYLASE"/>
    <property type="match status" value="1"/>
</dbReference>
<dbReference type="PANTHER" id="PTHR32119:SF2">
    <property type="entry name" value="OROTIDINE 5'-PHOSPHATE DECARBOXYLASE"/>
    <property type="match status" value="1"/>
</dbReference>
<dbReference type="Pfam" id="PF00215">
    <property type="entry name" value="OMPdecase"/>
    <property type="match status" value="1"/>
</dbReference>
<dbReference type="SMART" id="SM00934">
    <property type="entry name" value="OMPdecase"/>
    <property type="match status" value="1"/>
</dbReference>
<dbReference type="SUPFAM" id="SSF51366">
    <property type="entry name" value="Ribulose-phoshate binding barrel"/>
    <property type="match status" value="1"/>
</dbReference>
<dbReference type="PROSITE" id="PS00156">
    <property type="entry name" value="OMPDECASE"/>
    <property type="match status" value="1"/>
</dbReference>
<evidence type="ECO:0000255" key="1">
    <source>
        <dbReference type="HAMAP-Rule" id="MF_01200"/>
    </source>
</evidence>
<comment type="function">
    <text evidence="1">Catalyzes the decarboxylation of orotidine 5'-monophosphate (OMP) to uridine 5'-monophosphate (UMP).</text>
</comment>
<comment type="catalytic activity">
    <reaction evidence="1">
        <text>orotidine 5'-phosphate + H(+) = UMP + CO2</text>
        <dbReference type="Rhea" id="RHEA:11596"/>
        <dbReference type="ChEBI" id="CHEBI:15378"/>
        <dbReference type="ChEBI" id="CHEBI:16526"/>
        <dbReference type="ChEBI" id="CHEBI:57538"/>
        <dbReference type="ChEBI" id="CHEBI:57865"/>
        <dbReference type="EC" id="4.1.1.23"/>
    </reaction>
</comment>
<comment type="pathway">
    <text evidence="1">Pyrimidine metabolism; UMP biosynthesis via de novo pathway; UMP from orotate: step 2/2.</text>
</comment>
<comment type="subunit">
    <text evidence="1">Homodimer.</text>
</comment>
<comment type="similarity">
    <text evidence="1">Belongs to the OMP decarboxylase family. Type 1 subfamily.</text>
</comment>
<proteinExistence type="inferred from homology"/>
<keyword id="KW-0210">Decarboxylase</keyword>
<keyword id="KW-0456">Lyase</keyword>
<keyword id="KW-0665">Pyrimidine biosynthesis</keyword>
<reference key="1">
    <citation type="journal article" date="2005" name="J. Bacteriol.">
        <title>Genomic sequence of an otitis media isolate of nontypeable Haemophilus influenzae: comparative study with H. influenzae serotype d, strain KW20.</title>
        <authorList>
            <person name="Harrison A."/>
            <person name="Dyer D.W."/>
            <person name="Gillaspy A."/>
            <person name="Ray W.C."/>
            <person name="Mungur R."/>
            <person name="Carson M.B."/>
            <person name="Zhong H."/>
            <person name="Gipson J."/>
            <person name="Gipson M."/>
            <person name="Johnson L.S."/>
            <person name="Lewis L."/>
            <person name="Bakaletz L.O."/>
            <person name="Munson R.S. Jr."/>
        </authorList>
    </citation>
    <scope>NUCLEOTIDE SEQUENCE [LARGE SCALE GENOMIC DNA]</scope>
    <source>
        <strain>86-028NP</strain>
    </source>
</reference>
<protein>
    <recommendedName>
        <fullName evidence="1">Orotidine 5'-phosphate decarboxylase</fullName>
        <ecNumber evidence="1">4.1.1.23</ecNumber>
    </recommendedName>
    <alternativeName>
        <fullName evidence="1">OMP decarboxylase</fullName>
        <shortName evidence="1">OMPDCase</shortName>
        <shortName evidence="1">OMPdecase</shortName>
    </alternativeName>
</protein>
<organism>
    <name type="scientific">Haemophilus influenzae (strain 86-028NP)</name>
    <dbReference type="NCBI Taxonomy" id="281310"/>
    <lineage>
        <taxon>Bacteria</taxon>
        <taxon>Pseudomonadati</taxon>
        <taxon>Pseudomonadota</taxon>
        <taxon>Gammaproteobacteria</taxon>
        <taxon>Pasteurellales</taxon>
        <taxon>Pasteurellaceae</taxon>
        <taxon>Haemophilus</taxon>
    </lineage>
</organism>
<accession>Q4QJV1</accession>